<keyword id="KW-0963">Cytoplasm</keyword>
<keyword id="KW-0460">Magnesium</keyword>
<keyword id="KW-0479">Metal-binding</keyword>
<keyword id="KW-0548">Nucleotidyltransferase</keyword>
<keyword id="KW-1185">Reference proteome</keyword>
<keyword id="KW-0694">RNA-binding</keyword>
<keyword id="KW-0808">Transferase</keyword>
<gene>
    <name evidence="1" type="primary">pnp</name>
    <name type="ordered locus">SRU_1773</name>
</gene>
<organism>
    <name type="scientific">Salinibacter ruber (strain DSM 13855 / M31)</name>
    <dbReference type="NCBI Taxonomy" id="309807"/>
    <lineage>
        <taxon>Bacteria</taxon>
        <taxon>Pseudomonadati</taxon>
        <taxon>Rhodothermota</taxon>
        <taxon>Rhodothermia</taxon>
        <taxon>Rhodothermales</taxon>
        <taxon>Salinibacteraceae</taxon>
        <taxon>Salinibacter</taxon>
    </lineage>
</organism>
<reference key="1">
    <citation type="journal article" date="2005" name="Proc. Natl. Acad. Sci. U.S.A.">
        <title>The genome of Salinibacter ruber: convergence and gene exchange among hyperhalophilic bacteria and archaea.</title>
        <authorList>
            <person name="Mongodin E.F."/>
            <person name="Nelson K.E."/>
            <person name="Daugherty S."/>
            <person name="DeBoy R.T."/>
            <person name="Wister J."/>
            <person name="Khouri H."/>
            <person name="Weidman J."/>
            <person name="Walsh D.A."/>
            <person name="Papke R.T."/>
            <person name="Sanchez Perez G."/>
            <person name="Sharma A.K."/>
            <person name="Nesbo C.L."/>
            <person name="MacLeod D."/>
            <person name="Bapteste E."/>
            <person name="Doolittle W.F."/>
            <person name="Charlebois R.L."/>
            <person name="Legault B."/>
            <person name="Rodriguez-Valera F."/>
        </authorList>
    </citation>
    <scope>NUCLEOTIDE SEQUENCE [LARGE SCALE GENOMIC DNA]</scope>
    <source>
        <strain>DSM 13855 / CECT 5946 / M31</strain>
    </source>
</reference>
<evidence type="ECO:0000255" key="1">
    <source>
        <dbReference type="HAMAP-Rule" id="MF_01595"/>
    </source>
</evidence>
<evidence type="ECO:0000305" key="2"/>
<feature type="chain" id="PRO_0000329826" description="Polyribonucleotide nucleotidyltransferase">
    <location>
        <begin position="1"/>
        <end position="712"/>
    </location>
</feature>
<feature type="domain" description="KH" evidence="1">
    <location>
        <begin position="560"/>
        <end position="622"/>
    </location>
</feature>
<feature type="domain" description="S1 motif" evidence="1">
    <location>
        <begin position="632"/>
        <end position="700"/>
    </location>
</feature>
<feature type="binding site" evidence="1">
    <location>
        <position position="493"/>
    </location>
    <ligand>
        <name>Mg(2+)</name>
        <dbReference type="ChEBI" id="CHEBI:18420"/>
    </ligand>
</feature>
<feature type="binding site" evidence="1">
    <location>
        <position position="499"/>
    </location>
    <ligand>
        <name>Mg(2+)</name>
        <dbReference type="ChEBI" id="CHEBI:18420"/>
    </ligand>
</feature>
<comment type="function">
    <text evidence="1">Involved in mRNA degradation. Catalyzes the phosphorolysis of single-stranded polyribonucleotides processively in the 3'- to 5'-direction.</text>
</comment>
<comment type="catalytic activity">
    <reaction evidence="1">
        <text>RNA(n+1) + phosphate = RNA(n) + a ribonucleoside 5'-diphosphate</text>
        <dbReference type="Rhea" id="RHEA:22096"/>
        <dbReference type="Rhea" id="RHEA-COMP:14527"/>
        <dbReference type="Rhea" id="RHEA-COMP:17342"/>
        <dbReference type="ChEBI" id="CHEBI:43474"/>
        <dbReference type="ChEBI" id="CHEBI:57930"/>
        <dbReference type="ChEBI" id="CHEBI:140395"/>
        <dbReference type="EC" id="2.7.7.8"/>
    </reaction>
</comment>
<comment type="cofactor">
    <cofactor evidence="1">
        <name>Mg(2+)</name>
        <dbReference type="ChEBI" id="CHEBI:18420"/>
    </cofactor>
</comment>
<comment type="subcellular location">
    <subcellularLocation>
        <location evidence="1">Cytoplasm</location>
    </subcellularLocation>
</comment>
<comment type="similarity">
    <text evidence="1">Belongs to the polyribonucleotide nucleotidyltransferase family.</text>
</comment>
<comment type="sequence caution" evidence="2">
    <conflict type="erroneous initiation">
        <sequence resource="EMBL-CDS" id="ABC44372"/>
    </conflict>
</comment>
<sequence length="712" mass="78371">MKPEAHIEDIEFVPDRSLSLETGRIAKQADGSVVARLGDTMVLSTATLSDSVNESNFFPLTVDYREKFAAGGKVPGGFIKREGRPTDKETLTSRLIDRAIRPLFPDGFYHDVHVVNFVISAGQDFDADVIAGVGSSAALMLSGAPFAGPFAEVRVGRVDGDYIVNPTMQQTEESDIDLVVAGKEDALVMVEGEAEEISEESMIEALDVAHRSIRRLCEGQHRLVEQAGEPDPFEWEADRVPEQLVQRMREEYGPKVADHIHGPYSKETFHGGIGDLKDQAVDDVLGDASETPEGYTASDIRDAIGEVEKGEMRNMIVEEGKRIDGRDQTDVRDLWMEVGYLPRVHGSAIFTRGETQVLGSITLGTSDDVQPVDEVFADTDKSFYLHYRFPPFSVGEASYLRGPKRREIGHSMLAERALRPVIPEQDEFPYTIRINADVMESNGSSSMASVCAGSLALMDAGVPIEKPVAGIAMGLVQEDDETTVLTDILGQEDHLGDMDFKLTGTRDGITACQMDMKIEGLSRDVMLKALKQSRDARHHILDRMEETIAEPRAELSSHAPRLTKLTIDPDRIGAVIGPGGKVVKSVQEETNTEITVEEEEGVGIVTIAATNQRDAEAAIERIKQIVAVPEEGEDYVGTVKGIRDFGAFVEIMPEKTGLLHVSEIDYDYVENVEDYLEVGDKVKVHLLEVHDDGKMRLTRKPFVSEENGEQNE</sequence>
<protein>
    <recommendedName>
        <fullName evidence="1">Polyribonucleotide nucleotidyltransferase</fullName>
        <ecNumber evidence="1">2.7.7.8</ecNumber>
    </recommendedName>
    <alternativeName>
        <fullName evidence="1">Polynucleotide phosphorylase</fullName>
        <shortName evidence="1">PNPase</shortName>
    </alternativeName>
</protein>
<proteinExistence type="inferred from homology"/>
<dbReference type="EC" id="2.7.7.8" evidence="1"/>
<dbReference type="EMBL" id="CP000159">
    <property type="protein sequence ID" value="ABC44372.1"/>
    <property type="status" value="ALT_INIT"/>
    <property type="molecule type" value="Genomic_DNA"/>
</dbReference>
<dbReference type="RefSeq" id="WP_237701697.1">
    <property type="nucleotide sequence ID" value="NC_007677.1"/>
</dbReference>
<dbReference type="RefSeq" id="YP_445890.1">
    <property type="nucleotide sequence ID" value="NC_007677.1"/>
</dbReference>
<dbReference type="SMR" id="Q2S1P1"/>
<dbReference type="STRING" id="309807.SRU_1773"/>
<dbReference type="EnsemblBacteria" id="ABC44372">
    <property type="protein sequence ID" value="ABC44372"/>
    <property type="gene ID" value="SRU_1773"/>
</dbReference>
<dbReference type="KEGG" id="sru:SRU_1773"/>
<dbReference type="PATRIC" id="fig|309807.25.peg.1841"/>
<dbReference type="eggNOG" id="COG1185">
    <property type="taxonomic scope" value="Bacteria"/>
</dbReference>
<dbReference type="HOGENOM" id="CLU_004217_2_2_10"/>
<dbReference type="OrthoDB" id="9804305at2"/>
<dbReference type="Proteomes" id="UP000008674">
    <property type="component" value="Chromosome"/>
</dbReference>
<dbReference type="GO" id="GO:0005829">
    <property type="term" value="C:cytosol"/>
    <property type="evidence" value="ECO:0007669"/>
    <property type="project" value="TreeGrafter"/>
</dbReference>
<dbReference type="GO" id="GO:0000175">
    <property type="term" value="F:3'-5'-RNA exonuclease activity"/>
    <property type="evidence" value="ECO:0007669"/>
    <property type="project" value="TreeGrafter"/>
</dbReference>
<dbReference type="GO" id="GO:0000287">
    <property type="term" value="F:magnesium ion binding"/>
    <property type="evidence" value="ECO:0007669"/>
    <property type="project" value="UniProtKB-UniRule"/>
</dbReference>
<dbReference type="GO" id="GO:0004654">
    <property type="term" value="F:polyribonucleotide nucleotidyltransferase activity"/>
    <property type="evidence" value="ECO:0007669"/>
    <property type="project" value="UniProtKB-UniRule"/>
</dbReference>
<dbReference type="GO" id="GO:0003723">
    <property type="term" value="F:RNA binding"/>
    <property type="evidence" value="ECO:0007669"/>
    <property type="project" value="UniProtKB-UniRule"/>
</dbReference>
<dbReference type="GO" id="GO:0006402">
    <property type="term" value="P:mRNA catabolic process"/>
    <property type="evidence" value="ECO:0007669"/>
    <property type="project" value="UniProtKB-UniRule"/>
</dbReference>
<dbReference type="GO" id="GO:0006396">
    <property type="term" value="P:RNA processing"/>
    <property type="evidence" value="ECO:0007669"/>
    <property type="project" value="InterPro"/>
</dbReference>
<dbReference type="CDD" id="cd02393">
    <property type="entry name" value="KH-I_PNPase"/>
    <property type="match status" value="1"/>
</dbReference>
<dbReference type="CDD" id="cd11364">
    <property type="entry name" value="RNase_PH_PNPase_2"/>
    <property type="match status" value="1"/>
</dbReference>
<dbReference type="CDD" id="cd04472">
    <property type="entry name" value="S1_PNPase"/>
    <property type="match status" value="1"/>
</dbReference>
<dbReference type="FunFam" id="3.30.1370.10:FF:000001">
    <property type="entry name" value="Polyribonucleotide nucleotidyltransferase"/>
    <property type="match status" value="1"/>
</dbReference>
<dbReference type="FunFam" id="3.30.230.70:FF:000001">
    <property type="entry name" value="Polyribonucleotide nucleotidyltransferase"/>
    <property type="match status" value="1"/>
</dbReference>
<dbReference type="FunFam" id="3.30.230.70:FF:000002">
    <property type="entry name" value="Polyribonucleotide nucleotidyltransferase"/>
    <property type="match status" value="1"/>
</dbReference>
<dbReference type="Gene3D" id="3.30.230.70">
    <property type="entry name" value="GHMP Kinase, N-terminal domain"/>
    <property type="match status" value="2"/>
</dbReference>
<dbReference type="Gene3D" id="3.30.1370.10">
    <property type="entry name" value="K Homology domain, type 1"/>
    <property type="match status" value="1"/>
</dbReference>
<dbReference type="Gene3D" id="2.40.50.140">
    <property type="entry name" value="Nucleic acid-binding proteins"/>
    <property type="match status" value="1"/>
</dbReference>
<dbReference type="HAMAP" id="MF_01595">
    <property type="entry name" value="PNPase"/>
    <property type="match status" value="1"/>
</dbReference>
<dbReference type="InterPro" id="IPR001247">
    <property type="entry name" value="ExoRNase_PH_dom1"/>
</dbReference>
<dbReference type="InterPro" id="IPR015847">
    <property type="entry name" value="ExoRNase_PH_dom2"/>
</dbReference>
<dbReference type="InterPro" id="IPR036345">
    <property type="entry name" value="ExoRNase_PH_dom2_sf"/>
</dbReference>
<dbReference type="InterPro" id="IPR004087">
    <property type="entry name" value="KH_dom"/>
</dbReference>
<dbReference type="InterPro" id="IPR004088">
    <property type="entry name" value="KH_dom_type_1"/>
</dbReference>
<dbReference type="InterPro" id="IPR036612">
    <property type="entry name" value="KH_dom_type_1_sf"/>
</dbReference>
<dbReference type="InterPro" id="IPR012340">
    <property type="entry name" value="NA-bd_OB-fold"/>
</dbReference>
<dbReference type="InterPro" id="IPR012162">
    <property type="entry name" value="PNPase"/>
</dbReference>
<dbReference type="InterPro" id="IPR027408">
    <property type="entry name" value="PNPase/RNase_PH_dom_sf"/>
</dbReference>
<dbReference type="InterPro" id="IPR015848">
    <property type="entry name" value="PNPase_PH_RNA-bd_bac/org-type"/>
</dbReference>
<dbReference type="InterPro" id="IPR036456">
    <property type="entry name" value="PNPase_PH_RNA-bd_sf"/>
</dbReference>
<dbReference type="InterPro" id="IPR020568">
    <property type="entry name" value="Ribosomal_Su5_D2-typ_SF"/>
</dbReference>
<dbReference type="InterPro" id="IPR003029">
    <property type="entry name" value="S1_domain"/>
</dbReference>
<dbReference type="NCBIfam" id="TIGR03591">
    <property type="entry name" value="polynuc_phos"/>
    <property type="match status" value="1"/>
</dbReference>
<dbReference type="NCBIfam" id="NF008805">
    <property type="entry name" value="PRK11824.1"/>
    <property type="match status" value="1"/>
</dbReference>
<dbReference type="PANTHER" id="PTHR11252">
    <property type="entry name" value="POLYRIBONUCLEOTIDE NUCLEOTIDYLTRANSFERASE"/>
    <property type="match status" value="1"/>
</dbReference>
<dbReference type="PANTHER" id="PTHR11252:SF0">
    <property type="entry name" value="POLYRIBONUCLEOTIDE NUCLEOTIDYLTRANSFERASE 1, MITOCHONDRIAL"/>
    <property type="match status" value="1"/>
</dbReference>
<dbReference type="Pfam" id="PF00013">
    <property type="entry name" value="KH_1"/>
    <property type="match status" value="1"/>
</dbReference>
<dbReference type="Pfam" id="PF03726">
    <property type="entry name" value="PNPase"/>
    <property type="match status" value="1"/>
</dbReference>
<dbReference type="Pfam" id="PF01138">
    <property type="entry name" value="RNase_PH"/>
    <property type="match status" value="2"/>
</dbReference>
<dbReference type="Pfam" id="PF03725">
    <property type="entry name" value="RNase_PH_C"/>
    <property type="match status" value="2"/>
</dbReference>
<dbReference type="Pfam" id="PF00575">
    <property type="entry name" value="S1"/>
    <property type="match status" value="1"/>
</dbReference>
<dbReference type="PIRSF" id="PIRSF005499">
    <property type="entry name" value="PNPase"/>
    <property type="match status" value="1"/>
</dbReference>
<dbReference type="SMART" id="SM00322">
    <property type="entry name" value="KH"/>
    <property type="match status" value="1"/>
</dbReference>
<dbReference type="SMART" id="SM00316">
    <property type="entry name" value="S1"/>
    <property type="match status" value="1"/>
</dbReference>
<dbReference type="SUPFAM" id="SSF54791">
    <property type="entry name" value="Eukaryotic type KH-domain (KH-domain type I)"/>
    <property type="match status" value="1"/>
</dbReference>
<dbReference type="SUPFAM" id="SSF50249">
    <property type="entry name" value="Nucleic acid-binding proteins"/>
    <property type="match status" value="1"/>
</dbReference>
<dbReference type="SUPFAM" id="SSF46915">
    <property type="entry name" value="Polynucleotide phosphorylase/guanosine pentaphosphate synthase (PNPase/GPSI), domain 3"/>
    <property type="match status" value="1"/>
</dbReference>
<dbReference type="SUPFAM" id="SSF55666">
    <property type="entry name" value="Ribonuclease PH domain 2-like"/>
    <property type="match status" value="2"/>
</dbReference>
<dbReference type="SUPFAM" id="SSF54211">
    <property type="entry name" value="Ribosomal protein S5 domain 2-like"/>
    <property type="match status" value="2"/>
</dbReference>
<dbReference type="PROSITE" id="PS50084">
    <property type="entry name" value="KH_TYPE_1"/>
    <property type="match status" value="1"/>
</dbReference>
<dbReference type="PROSITE" id="PS50126">
    <property type="entry name" value="S1"/>
    <property type="match status" value="1"/>
</dbReference>
<name>PNP_SALRD</name>
<accession>Q2S1P1</accession>